<name>RSMH_TRIV2</name>
<comment type="function">
    <text evidence="1">Specifically methylates the N4 position of cytidine in position 1402 (C1402) of 16S rRNA.</text>
</comment>
<comment type="catalytic activity">
    <reaction evidence="1">
        <text>cytidine(1402) in 16S rRNA + S-adenosyl-L-methionine = N(4)-methylcytidine(1402) in 16S rRNA + S-adenosyl-L-homocysteine + H(+)</text>
        <dbReference type="Rhea" id="RHEA:42928"/>
        <dbReference type="Rhea" id="RHEA-COMP:10286"/>
        <dbReference type="Rhea" id="RHEA-COMP:10287"/>
        <dbReference type="ChEBI" id="CHEBI:15378"/>
        <dbReference type="ChEBI" id="CHEBI:57856"/>
        <dbReference type="ChEBI" id="CHEBI:59789"/>
        <dbReference type="ChEBI" id="CHEBI:74506"/>
        <dbReference type="ChEBI" id="CHEBI:82748"/>
        <dbReference type="EC" id="2.1.1.199"/>
    </reaction>
</comment>
<comment type="subcellular location">
    <subcellularLocation>
        <location evidence="1">Cytoplasm</location>
    </subcellularLocation>
</comment>
<comment type="similarity">
    <text evidence="1">Belongs to the methyltransferase superfamily. RsmH family.</text>
</comment>
<feature type="chain" id="PRO_0000386711" description="Ribosomal RNA small subunit methyltransferase H">
    <location>
        <begin position="1"/>
        <end position="305"/>
    </location>
</feature>
<feature type="binding site" evidence="1">
    <location>
        <begin position="46"/>
        <end position="48"/>
    </location>
    <ligand>
        <name>S-adenosyl-L-methionine</name>
        <dbReference type="ChEBI" id="CHEBI:59789"/>
    </ligand>
</feature>
<feature type="binding site" evidence="1">
    <location>
        <position position="65"/>
    </location>
    <ligand>
        <name>S-adenosyl-L-methionine</name>
        <dbReference type="ChEBI" id="CHEBI:59789"/>
    </ligand>
</feature>
<feature type="binding site" evidence="1">
    <location>
        <position position="92"/>
    </location>
    <ligand>
        <name>S-adenosyl-L-methionine</name>
        <dbReference type="ChEBI" id="CHEBI:59789"/>
    </ligand>
</feature>
<feature type="binding site" evidence="1">
    <location>
        <position position="108"/>
    </location>
    <ligand>
        <name>S-adenosyl-L-methionine</name>
        <dbReference type="ChEBI" id="CHEBI:59789"/>
    </ligand>
</feature>
<feature type="binding site" evidence="1">
    <location>
        <position position="115"/>
    </location>
    <ligand>
        <name>S-adenosyl-L-methionine</name>
        <dbReference type="ChEBI" id="CHEBI:59789"/>
    </ligand>
</feature>
<evidence type="ECO:0000255" key="1">
    <source>
        <dbReference type="HAMAP-Rule" id="MF_01007"/>
    </source>
</evidence>
<reference key="1">
    <citation type="journal article" date="2014" name="Stand. Genomic Sci.">
        <title>Complete genome sequence of Anabaena variabilis ATCC 29413.</title>
        <authorList>
            <person name="Thiel T."/>
            <person name="Pratte B.S."/>
            <person name="Zhong J."/>
            <person name="Goodwin L."/>
            <person name="Copeland A."/>
            <person name="Lucas S."/>
            <person name="Han C."/>
            <person name="Pitluck S."/>
            <person name="Land M.L."/>
            <person name="Kyrpides N.C."/>
            <person name="Woyke T."/>
        </authorList>
    </citation>
    <scope>NUCLEOTIDE SEQUENCE [LARGE SCALE GENOMIC DNA]</scope>
    <source>
        <strain>ATCC 29413 / PCC 7937</strain>
    </source>
</reference>
<gene>
    <name evidence="1" type="primary">rsmH</name>
    <name type="synonym">mraW</name>
    <name type="ordered locus">Ava_3196</name>
</gene>
<sequence>MKSHSAKSLSVEEATFSHLPVLPQEVVTGLAVRSGGHYLDATVGGGGHSRLILEAAPDVRLTAVDQDGDALTAAKKELAEFGEQVKFVRSNFAAYEFPVASFDGVLADLGVSSYHLDTPERGFSFRHQANLDMRMDQRQSLSAADVINDWDEVELANIFFKYGEERLSRRIARRIVEKRPFHTTTELAEAIASSVPPKYRYARIHPATRVFQALRIVVNDELKSLETFLEKAPKALVPGGRIAIISFHSLEDRLVKHGLRNSPSLKVLTKKPIIATEAEIANNPRSRSAKLRIAEKKAEMGQEDN</sequence>
<protein>
    <recommendedName>
        <fullName evidence="1">Ribosomal RNA small subunit methyltransferase H</fullName>
        <ecNumber evidence="1">2.1.1.199</ecNumber>
    </recommendedName>
    <alternativeName>
        <fullName evidence="1">16S rRNA m(4)C1402 methyltransferase</fullName>
    </alternativeName>
    <alternativeName>
        <fullName evidence="1">rRNA (cytosine-N(4)-)-methyltransferase RsmH</fullName>
    </alternativeName>
</protein>
<keyword id="KW-0963">Cytoplasm</keyword>
<keyword id="KW-0489">Methyltransferase</keyword>
<keyword id="KW-0698">rRNA processing</keyword>
<keyword id="KW-0949">S-adenosyl-L-methionine</keyword>
<keyword id="KW-0808">Transferase</keyword>
<proteinExistence type="inferred from homology"/>
<dbReference type="EC" id="2.1.1.199" evidence="1"/>
<dbReference type="EMBL" id="CP000117">
    <property type="protein sequence ID" value="ABA22804.1"/>
    <property type="molecule type" value="Genomic_DNA"/>
</dbReference>
<dbReference type="SMR" id="Q3M882"/>
<dbReference type="STRING" id="240292.Ava_3196"/>
<dbReference type="KEGG" id="ava:Ava_3196"/>
<dbReference type="eggNOG" id="COG0275">
    <property type="taxonomic scope" value="Bacteria"/>
</dbReference>
<dbReference type="HOGENOM" id="CLU_038422_3_0_3"/>
<dbReference type="Proteomes" id="UP000002533">
    <property type="component" value="Chromosome"/>
</dbReference>
<dbReference type="GO" id="GO:0005737">
    <property type="term" value="C:cytoplasm"/>
    <property type="evidence" value="ECO:0007669"/>
    <property type="project" value="UniProtKB-SubCell"/>
</dbReference>
<dbReference type="GO" id="GO:0071424">
    <property type="term" value="F:rRNA (cytosine-N4-)-methyltransferase activity"/>
    <property type="evidence" value="ECO:0007669"/>
    <property type="project" value="UniProtKB-UniRule"/>
</dbReference>
<dbReference type="GO" id="GO:0070475">
    <property type="term" value="P:rRNA base methylation"/>
    <property type="evidence" value="ECO:0007669"/>
    <property type="project" value="UniProtKB-UniRule"/>
</dbReference>
<dbReference type="CDD" id="cd02440">
    <property type="entry name" value="AdoMet_MTases"/>
    <property type="match status" value="1"/>
</dbReference>
<dbReference type="Gene3D" id="1.10.150.170">
    <property type="entry name" value="Putative methyltransferase TM0872, insert domain"/>
    <property type="match status" value="1"/>
</dbReference>
<dbReference type="Gene3D" id="3.40.50.150">
    <property type="entry name" value="Vaccinia Virus protein VP39"/>
    <property type="match status" value="1"/>
</dbReference>
<dbReference type="HAMAP" id="MF_01007">
    <property type="entry name" value="16SrRNA_methyltr_H"/>
    <property type="match status" value="1"/>
</dbReference>
<dbReference type="InterPro" id="IPR002903">
    <property type="entry name" value="RsmH"/>
</dbReference>
<dbReference type="InterPro" id="IPR023397">
    <property type="entry name" value="SAM-dep_MeTrfase_MraW_recog"/>
</dbReference>
<dbReference type="InterPro" id="IPR029063">
    <property type="entry name" value="SAM-dependent_MTases_sf"/>
</dbReference>
<dbReference type="NCBIfam" id="TIGR00006">
    <property type="entry name" value="16S rRNA (cytosine(1402)-N(4))-methyltransferase RsmH"/>
    <property type="match status" value="1"/>
</dbReference>
<dbReference type="PANTHER" id="PTHR11265:SF0">
    <property type="entry name" value="12S RRNA N4-METHYLCYTIDINE METHYLTRANSFERASE"/>
    <property type="match status" value="1"/>
</dbReference>
<dbReference type="PANTHER" id="PTHR11265">
    <property type="entry name" value="S-ADENOSYL-METHYLTRANSFERASE MRAW"/>
    <property type="match status" value="1"/>
</dbReference>
<dbReference type="Pfam" id="PF01795">
    <property type="entry name" value="Methyltransf_5"/>
    <property type="match status" value="1"/>
</dbReference>
<dbReference type="PIRSF" id="PIRSF004486">
    <property type="entry name" value="MraW"/>
    <property type="match status" value="1"/>
</dbReference>
<dbReference type="SUPFAM" id="SSF81799">
    <property type="entry name" value="Putative methyltransferase TM0872, insert domain"/>
    <property type="match status" value="1"/>
</dbReference>
<dbReference type="SUPFAM" id="SSF53335">
    <property type="entry name" value="S-adenosyl-L-methionine-dependent methyltransferases"/>
    <property type="match status" value="1"/>
</dbReference>
<accession>Q3M882</accession>
<organism>
    <name type="scientific">Trichormus variabilis (strain ATCC 29413 / PCC 7937)</name>
    <name type="common">Anabaena variabilis</name>
    <dbReference type="NCBI Taxonomy" id="240292"/>
    <lineage>
        <taxon>Bacteria</taxon>
        <taxon>Bacillati</taxon>
        <taxon>Cyanobacteriota</taxon>
        <taxon>Cyanophyceae</taxon>
        <taxon>Nostocales</taxon>
        <taxon>Nostocaceae</taxon>
        <taxon>Trichormus</taxon>
    </lineage>
</organism>